<gene>
    <name type="primary">rpl22</name>
</gene>
<protein>
    <recommendedName>
        <fullName evidence="2">Large ribosomal subunit protein uL22c</fullName>
    </recommendedName>
    <alternativeName>
        <fullName>50S ribosomal protein L22, chloroplastic</fullName>
    </alternativeName>
</protein>
<name>RK22_STAPU</name>
<sequence>MIEKNNSNVSPPRRDLQEVRAIAKRVRMSPHKVRKVIDQIRGRSYEEALMLLEFMPYRACYPILQTVCSAAANANHNLGLSKANLIISKVMVDQGPVLKRFRPRAQGRGYPIRKPSCTITVFVKNHPSQNEN</sequence>
<accession>Q32RV5</accession>
<evidence type="ECO:0000250" key="1"/>
<evidence type="ECO:0000305" key="2"/>
<feature type="chain" id="PRO_0000243247" description="Large ribosomal subunit protein uL22c">
    <location>
        <begin position="1"/>
        <end position="132"/>
    </location>
</feature>
<organism>
    <name type="scientific">Staurastrum punctulatum</name>
    <name type="common">Green alga</name>
    <name type="synonym">Cosmoastrum punctulatum</name>
    <dbReference type="NCBI Taxonomy" id="102822"/>
    <lineage>
        <taxon>Eukaryota</taxon>
        <taxon>Viridiplantae</taxon>
        <taxon>Streptophyta</taxon>
        <taxon>Zygnematophyceae</taxon>
        <taxon>Zygnematophycidae</taxon>
        <taxon>Desmidiales</taxon>
        <taxon>Desmidiaceae</taxon>
        <taxon>Staurastrum</taxon>
    </lineage>
</organism>
<proteinExistence type="inferred from homology"/>
<comment type="function">
    <text evidence="1">This protein binds specifically to 23S rRNA.</text>
</comment>
<comment type="function">
    <text evidence="1">The globular domain of the protein is located near the polypeptide exit tunnel on the outside of the subunit, while an extended beta-hairpin is found that lines the wall of the exit tunnel in the center of the 70S ribosome.</text>
</comment>
<comment type="subunit">
    <text evidence="1">Part of the 50S ribosomal subunit.</text>
</comment>
<comment type="subcellular location">
    <subcellularLocation>
        <location>Plastid</location>
        <location>Chloroplast</location>
    </subcellularLocation>
</comment>
<comment type="similarity">
    <text evidence="2">Belongs to the universal ribosomal protein uL22 family.</text>
</comment>
<geneLocation type="chloroplast"/>
<keyword id="KW-0150">Chloroplast</keyword>
<keyword id="KW-0934">Plastid</keyword>
<keyword id="KW-0687">Ribonucleoprotein</keyword>
<keyword id="KW-0689">Ribosomal protein</keyword>
<keyword id="KW-0694">RNA-binding</keyword>
<keyword id="KW-0699">rRNA-binding</keyword>
<reference key="1">
    <citation type="journal article" date="2005" name="BMC Biol.">
        <title>The complete chloroplast DNA sequences of the charophycean green algae Staurastrum and Zygnema reveal that the chloroplast genome underwent extensive changes during the evolution of the Zygnematales.</title>
        <authorList>
            <person name="Turmel M."/>
            <person name="Otis C."/>
            <person name="Lemieux C."/>
        </authorList>
    </citation>
    <scope>NUCLEOTIDE SEQUENCE [LARGE SCALE GENOMIC DNA]</scope>
</reference>
<dbReference type="EMBL" id="AY958085">
    <property type="protein sequence ID" value="AAX45742.1"/>
    <property type="molecule type" value="Genomic_DNA"/>
</dbReference>
<dbReference type="RefSeq" id="YP_636421.1">
    <property type="nucleotide sequence ID" value="NC_008116.1"/>
</dbReference>
<dbReference type="SMR" id="Q32RV5"/>
<dbReference type="GeneID" id="4108604"/>
<dbReference type="GO" id="GO:0009507">
    <property type="term" value="C:chloroplast"/>
    <property type="evidence" value="ECO:0007669"/>
    <property type="project" value="UniProtKB-SubCell"/>
</dbReference>
<dbReference type="GO" id="GO:0015934">
    <property type="term" value="C:large ribosomal subunit"/>
    <property type="evidence" value="ECO:0007669"/>
    <property type="project" value="InterPro"/>
</dbReference>
<dbReference type="GO" id="GO:0019843">
    <property type="term" value="F:rRNA binding"/>
    <property type="evidence" value="ECO:0007669"/>
    <property type="project" value="UniProtKB-UniRule"/>
</dbReference>
<dbReference type="GO" id="GO:0003735">
    <property type="term" value="F:structural constituent of ribosome"/>
    <property type="evidence" value="ECO:0007669"/>
    <property type="project" value="InterPro"/>
</dbReference>
<dbReference type="GO" id="GO:0006412">
    <property type="term" value="P:translation"/>
    <property type="evidence" value="ECO:0007669"/>
    <property type="project" value="UniProtKB-UniRule"/>
</dbReference>
<dbReference type="CDD" id="cd00336">
    <property type="entry name" value="Ribosomal_L22"/>
    <property type="match status" value="1"/>
</dbReference>
<dbReference type="FunFam" id="3.90.470.10:FF:000004">
    <property type="entry name" value="50S ribosomal protein L22, chloroplastic"/>
    <property type="match status" value="1"/>
</dbReference>
<dbReference type="Gene3D" id="3.90.470.10">
    <property type="entry name" value="Ribosomal protein L22/L17"/>
    <property type="match status" value="1"/>
</dbReference>
<dbReference type="HAMAP" id="MF_01331_B">
    <property type="entry name" value="Ribosomal_uL22_B"/>
    <property type="match status" value="1"/>
</dbReference>
<dbReference type="InterPro" id="IPR001063">
    <property type="entry name" value="Ribosomal_uL22"/>
</dbReference>
<dbReference type="InterPro" id="IPR005727">
    <property type="entry name" value="Ribosomal_uL22_bac/chlpt-type"/>
</dbReference>
<dbReference type="InterPro" id="IPR047867">
    <property type="entry name" value="Ribosomal_uL22_bac/org-type"/>
</dbReference>
<dbReference type="InterPro" id="IPR036394">
    <property type="entry name" value="Ribosomal_uL22_sf"/>
</dbReference>
<dbReference type="NCBIfam" id="TIGR01044">
    <property type="entry name" value="rplV_bact"/>
    <property type="match status" value="1"/>
</dbReference>
<dbReference type="PANTHER" id="PTHR13501">
    <property type="entry name" value="CHLOROPLAST 50S RIBOSOMAL PROTEIN L22-RELATED"/>
    <property type="match status" value="1"/>
</dbReference>
<dbReference type="PANTHER" id="PTHR13501:SF10">
    <property type="entry name" value="LARGE RIBOSOMAL SUBUNIT PROTEIN UL22M"/>
    <property type="match status" value="1"/>
</dbReference>
<dbReference type="Pfam" id="PF00237">
    <property type="entry name" value="Ribosomal_L22"/>
    <property type="match status" value="1"/>
</dbReference>
<dbReference type="SUPFAM" id="SSF54843">
    <property type="entry name" value="Ribosomal protein L22"/>
    <property type="match status" value="1"/>
</dbReference>